<feature type="initiator methionine" description="Removed" evidence="1">
    <location>
        <position position="1"/>
    </location>
</feature>
<feature type="chain" id="PRO_0000162701" description="Ribosomal large subunit pseudouridine synthase D">
    <location>
        <begin position="2"/>
        <end position="326"/>
    </location>
</feature>
<feature type="domain" description="S4 RNA-binding" evidence="3">
    <location>
        <begin position="18"/>
        <end position="91"/>
    </location>
</feature>
<feature type="active site" evidence="1">
    <location>
        <position position="139"/>
    </location>
</feature>
<keyword id="KW-0963">Cytoplasm</keyword>
<keyword id="KW-0413">Isomerase</keyword>
<keyword id="KW-1185">Reference proteome</keyword>
<keyword id="KW-0694">RNA-binding</keyword>
<keyword id="KW-0698">rRNA processing</keyword>
<gene>
    <name type="primary">rluD</name>
    <name type="synonym">sfhB</name>
    <name type="ordered locus">SF2653</name>
    <name type="ordered locus">S2829</name>
</gene>
<sequence>MAQRVQLTATVSENQLGQRLDQALAEMFPDYSRSRIKEWILDQRVLVNGKVCDKPKEKVLGGEQVAINAEIEEEARFEPQDIPLDIVYEDEDIIVINKPRDLVVHPGAGNPDGTVLNALLHYYPPIADVPRAGIVHRLDKDTTGLMVVAKTVPAQTRLVESLQRREITREYEAVAIGHMTAGGTVDEPISRHPTKRTHMAVHPMGKPAVTHYRIMEHFRVHTRLRLRLETGRTHQIRVHMAHITHPLVGDPVYGGRPRPPKGASEAFISTLRKFDRQALHATMLRLYHPISGIEMEWHAPIPQDMVELIEVMRADFEEHKDEVDWL</sequence>
<organism>
    <name type="scientific">Shigella flexneri</name>
    <dbReference type="NCBI Taxonomy" id="623"/>
    <lineage>
        <taxon>Bacteria</taxon>
        <taxon>Pseudomonadati</taxon>
        <taxon>Pseudomonadota</taxon>
        <taxon>Gammaproteobacteria</taxon>
        <taxon>Enterobacterales</taxon>
        <taxon>Enterobacteriaceae</taxon>
        <taxon>Shigella</taxon>
    </lineage>
</organism>
<evidence type="ECO:0000250" key="1"/>
<evidence type="ECO:0000250" key="2">
    <source>
        <dbReference type="UniProtKB" id="P33643"/>
    </source>
</evidence>
<evidence type="ECO:0000255" key="3">
    <source>
        <dbReference type="PROSITE-ProRule" id="PRU00182"/>
    </source>
</evidence>
<evidence type="ECO:0000305" key="4"/>
<reference key="1">
    <citation type="journal article" date="2002" name="Nucleic Acids Res.">
        <title>Genome sequence of Shigella flexneri 2a: insights into pathogenicity through comparison with genomes of Escherichia coli K12 and O157.</title>
        <authorList>
            <person name="Jin Q."/>
            <person name="Yuan Z."/>
            <person name="Xu J."/>
            <person name="Wang Y."/>
            <person name="Shen Y."/>
            <person name="Lu W."/>
            <person name="Wang J."/>
            <person name="Liu H."/>
            <person name="Yang J."/>
            <person name="Yang F."/>
            <person name="Zhang X."/>
            <person name="Zhang J."/>
            <person name="Yang G."/>
            <person name="Wu H."/>
            <person name="Qu D."/>
            <person name="Dong J."/>
            <person name="Sun L."/>
            <person name="Xue Y."/>
            <person name="Zhao A."/>
            <person name="Gao Y."/>
            <person name="Zhu J."/>
            <person name="Kan B."/>
            <person name="Ding K."/>
            <person name="Chen S."/>
            <person name="Cheng H."/>
            <person name="Yao Z."/>
            <person name="He B."/>
            <person name="Chen R."/>
            <person name="Ma D."/>
            <person name="Qiang B."/>
            <person name="Wen Y."/>
            <person name="Hou Y."/>
            <person name="Yu J."/>
        </authorList>
    </citation>
    <scope>NUCLEOTIDE SEQUENCE [LARGE SCALE GENOMIC DNA]</scope>
    <source>
        <strain>301 / Serotype 2a</strain>
    </source>
</reference>
<reference key="2">
    <citation type="journal article" date="2003" name="Infect. Immun.">
        <title>Complete genome sequence and comparative genomics of Shigella flexneri serotype 2a strain 2457T.</title>
        <authorList>
            <person name="Wei J."/>
            <person name="Goldberg M.B."/>
            <person name="Burland V."/>
            <person name="Venkatesan M.M."/>
            <person name="Deng W."/>
            <person name="Fournier G."/>
            <person name="Mayhew G.F."/>
            <person name="Plunkett G. III"/>
            <person name="Rose D.J."/>
            <person name="Darling A."/>
            <person name="Mau B."/>
            <person name="Perna N.T."/>
            <person name="Payne S.M."/>
            <person name="Runyen-Janecky L.J."/>
            <person name="Zhou S."/>
            <person name="Schwartz D.C."/>
            <person name="Blattner F.R."/>
        </authorList>
    </citation>
    <scope>NUCLEOTIDE SEQUENCE [LARGE SCALE GENOMIC DNA]</scope>
    <source>
        <strain>ATCC 700930 / 2457T / Serotype 2a</strain>
    </source>
</reference>
<dbReference type="EC" id="5.4.99.23" evidence="2"/>
<dbReference type="EMBL" id="AE005674">
    <property type="protein sequence ID" value="AAN44149.1"/>
    <property type="molecule type" value="Genomic_DNA"/>
</dbReference>
<dbReference type="EMBL" id="AE014073">
    <property type="protein sequence ID" value="AAP17972.1"/>
    <property type="molecule type" value="Genomic_DNA"/>
</dbReference>
<dbReference type="RefSeq" id="NP_708442.1">
    <property type="nucleotide sequence ID" value="NC_004337.2"/>
</dbReference>
<dbReference type="RefSeq" id="WP_000079112.1">
    <property type="nucleotide sequence ID" value="NZ_WPGW01000198.1"/>
</dbReference>
<dbReference type="SMR" id="P65835"/>
<dbReference type="STRING" id="198214.SF2653"/>
<dbReference type="PaxDb" id="198214-SF2653"/>
<dbReference type="GeneID" id="1027476"/>
<dbReference type="GeneID" id="93774492"/>
<dbReference type="KEGG" id="sfl:SF2653"/>
<dbReference type="KEGG" id="sfx:S2829"/>
<dbReference type="PATRIC" id="fig|198214.7.peg.3162"/>
<dbReference type="HOGENOM" id="CLU_016902_4_0_6"/>
<dbReference type="Proteomes" id="UP000001006">
    <property type="component" value="Chromosome"/>
</dbReference>
<dbReference type="Proteomes" id="UP000002673">
    <property type="component" value="Chromosome"/>
</dbReference>
<dbReference type="GO" id="GO:0005737">
    <property type="term" value="C:cytoplasm"/>
    <property type="evidence" value="ECO:0007669"/>
    <property type="project" value="UniProtKB-SubCell"/>
</dbReference>
<dbReference type="GO" id="GO:0160140">
    <property type="term" value="F:23S rRNA pseudouridine(1911/1915/1917) synthase activity"/>
    <property type="evidence" value="ECO:0007669"/>
    <property type="project" value="UniProtKB-EC"/>
</dbReference>
<dbReference type="GO" id="GO:0003723">
    <property type="term" value="F:RNA binding"/>
    <property type="evidence" value="ECO:0007669"/>
    <property type="project" value="UniProtKB-KW"/>
</dbReference>
<dbReference type="GO" id="GO:0000455">
    <property type="term" value="P:enzyme-directed rRNA pseudouridine synthesis"/>
    <property type="evidence" value="ECO:0007669"/>
    <property type="project" value="TreeGrafter"/>
</dbReference>
<dbReference type="CDD" id="cd02869">
    <property type="entry name" value="PseudoU_synth_RluA_like"/>
    <property type="match status" value="1"/>
</dbReference>
<dbReference type="CDD" id="cd00165">
    <property type="entry name" value="S4"/>
    <property type="match status" value="1"/>
</dbReference>
<dbReference type="FunFam" id="3.10.290.10:FF:000011">
    <property type="entry name" value="Pseudouridine synthase"/>
    <property type="match status" value="1"/>
</dbReference>
<dbReference type="FunFam" id="3.30.2350.10:FF:000004">
    <property type="entry name" value="Pseudouridine synthase"/>
    <property type="match status" value="1"/>
</dbReference>
<dbReference type="Gene3D" id="6.10.140.230">
    <property type="match status" value="1"/>
</dbReference>
<dbReference type="Gene3D" id="3.30.2350.10">
    <property type="entry name" value="Pseudouridine synthase"/>
    <property type="match status" value="1"/>
</dbReference>
<dbReference type="Gene3D" id="3.10.290.10">
    <property type="entry name" value="RNA-binding S4 domain"/>
    <property type="match status" value="1"/>
</dbReference>
<dbReference type="InterPro" id="IPR020103">
    <property type="entry name" value="PsdUridine_synth_cat_dom_sf"/>
</dbReference>
<dbReference type="InterPro" id="IPR006224">
    <property type="entry name" value="PsdUridine_synth_RluA-like_CS"/>
</dbReference>
<dbReference type="InterPro" id="IPR006225">
    <property type="entry name" value="PsdUridine_synth_RluC/D"/>
</dbReference>
<dbReference type="InterPro" id="IPR006145">
    <property type="entry name" value="PsdUridine_synth_RsuA/RluA"/>
</dbReference>
<dbReference type="InterPro" id="IPR050188">
    <property type="entry name" value="RluA_PseudoU_synthase"/>
</dbReference>
<dbReference type="InterPro" id="IPR002942">
    <property type="entry name" value="S4_RNA-bd"/>
</dbReference>
<dbReference type="InterPro" id="IPR036986">
    <property type="entry name" value="S4_RNA-bd_sf"/>
</dbReference>
<dbReference type="NCBIfam" id="NF008385">
    <property type="entry name" value="PRK11180.1"/>
    <property type="match status" value="1"/>
</dbReference>
<dbReference type="NCBIfam" id="TIGR00005">
    <property type="entry name" value="rluA_subfam"/>
    <property type="match status" value="1"/>
</dbReference>
<dbReference type="PANTHER" id="PTHR21600">
    <property type="entry name" value="MITOCHONDRIAL RNA PSEUDOURIDINE SYNTHASE"/>
    <property type="match status" value="1"/>
</dbReference>
<dbReference type="PANTHER" id="PTHR21600:SF44">
    <property type="entry name" value="RIBOSOMAL LARGE SUBUNIT PSEUDOURIDINE SYNTHASE D"/>
    <property type="match status" value="1"/>
</dbReference>
<dbReference type="Pfam" id="PF00849">
    <property type="entry name" value="PseudoU_synth_2"/>
    <property type="match status" value="1"/>
</dbReference>
<dbReference type="Pfam" id="PF01479">
    <property type="entry name" value="S4"/>
    <property type="match status" value="1"/>
</dbReference>
<dbReference type="SMART" id="SM00363">
    <property type="entry name" value="S4"/>
    <property type="match status" value="1"/>
</dbReference>
<dbReference type="SUPFAM" id="SSF55174">
    <property type="entry name" value="Alpha-L RNA-binding motif"/>
    <property type="match status" value="1"/>
</dbReference>
<dbReference type="SUPFAM" id="SSF55120">
    <property type="entry name" value="Pseudouridine synthase"/>
    <property type="match status" value="1"/>
</dbReference>
<dbReference type="PROSITE" id="PS01129">
    <property type="entry name" value="PSI_RLU"/>
    <property type="match status" value="1"/>
</dbReference>
<dbReference type="PROSITE" id="PS50889">
    <property type="entry name" value="S4"/>
    <property type="match status" value="1"/>
</dbReference>
<name>RLUD_SHIFL</name>
<protein>
    <recommendedName>
        <fullName evidence="2">Ribosomal large subunit pseudouridine synthase D</fullName>
        <ecNumber evidence="2">5.4.99.23</ecNumber>
    </recommendedName>
    <alternativeName>
        <fullName>23S rRNA pseudouridine(1911/1915/1917) synthase</fullName>
    </alternativeName>
    <alternativeName>
        <fullName>rRNA pseudouridylate synthase D</fullName>
    </alternativeName>
    <alternativeName>
        <fullName>rRNA-uridine isomerase D</fullName>
    </alternativeName>
</protein>
<accession>P65835</accession>
<accession>Q83QI0</accession>
<accession>Q8FEZ9</accession>
<comment type="function">
    <text evidence="2">Responsible for synthesis of pseudouridine from uracil at positions 1911, 1915 and 1917 in 23S ribosomal RNA.</text>
</comment>
<comment type="catalytic activity">
    <reaction evidence="2">
        <text>uridine(1911/1915/1917) in 23S rRNA = pseudouridine(1911/1915/1917) in 23S rRNA</text>
        <dbReference type="Rhea" id="RHEA:42524"/>
        <dbReference type="Rhea" id="RHEA-COMP:10097"/>
        <dbReference type="Rhea" id="RHEA-COMP:10098"/>
        <dbReference type="ChEBI" id="CHEBI:65314"/>
        <dbReference type="ChEBI" id="CHEBI:65315"/>
        <dbReference type="EC" id="5.4.99.23"/>
    </reaction>
</comment>
<comment type="subcellular location">
    <subcellularLocation>
        <location evidence="2">Cytoplasm</location>
    </subcellularLocation>
    <text evidence="2">Associates with late stage pre-50S ribosomal subunits.</text>
</comment>
<comment type="similarity">
    <text evidence="4">Belongs to the pseudouridine synthase RluA family.</text>
</comment>
<proteinExistence type="inferred from homology"/>